<sequence length="384" mass="41494">MEAKDHIERRPDRVSIRRLKLVNFRNYAELSLPLGPGHVVLTGENGSGKTNLIEAISFLSPGRGLRRAAYDDVARANAEGGFAIHAALDCMIYGDAEIGTGTAGGGEGGRKVRINRIAASADDLLDYARILWVVPSMDGLFTGGASDRRRFLDRMVLAIDTAHGKRVLDYEKAMRSRNRLLNDGSNDDQWLDAIENQMAELGTAIAAARAQAMRLIAAMIERLPAEGPFPKADCFLEGALESRIGVEAALDLEEDFRRTLRDGRARDRAAGRTLDGPHRTDLIVQHRPKSMPAALCSTGEQKALLIGLILAHARLTAELSGMAPILLLDEIAAHLDMGRRAALFGILDELGGQAFMTGTDRALFDALAGDAQFFNVSAGQLTGI</sequence>
<dbReference type="EMBL" id="AE008917">
    <property type="protein sequence ID" value="AAL53122.1"/>
    <property type="molecule type" value="Genomic_DNA"/>
</dbReference>
<dbReference type="PIR" id="AG3494">
    <property type="entry name" value="AG3494"/>
</dbReference>
<dbReference type="RefSeq" id="WP_002965250.1">
    <property type="nucleotide sequence ID" value="NZ_GG703778.1"/>
</dbReference>
<dbReference type="SMR" id="Q8YED7"/>
<dbReference type="GeneID" id="93017511"/>
<dbReference type="KEGG" id="bme:BMEI1941"/>
<dbReference type="KEGG" id="bmel:DK63_1550"/>
<dbReference type="PATRIC" id="fig|224914.52.peg.1636"/>
<dbReference type="eggNOG" id="COG1195">
    <property type="taxonomic scope" value="Bacteria"/>
</dbReference>
<dbReference type="PhylomeDB" id="Q8YED7"/>
<dbReference type="Proteomes" id="UP000000419">
    <property type="component" value="Chromosome I"/>
</dbReference>
<dbReference type="GO" id="GO:0005737">
    <property type="term" value="C:cytoplasm"/>
    <property type="evidence" value="ECO:0007669"/>
    <property type="project" value="UniProtKB-SubCell"/>
</dbReference>
<dbReference type="GO" id="GO:0005524">
    <property type="term" value="F:ATP binding"/>
    <property type="evidence" value="ECO:0007669"/>
    <property type="project" value="UniProtKB-UniRule"/>
</dbReference>
<dbReference type="GO" id="GO:0016887">
    <property type="term" value="F:ATP hydrolysis activity"/>
    <property type="evidence" value="ECO:0007669"/>
    <property type="project" value="InterPro"/>
</dbReference>
<dbReference type="GO" id="GO:0003697">
    <property type="term" value="F:single-stranded DNA binding"/>
    <property type="evidence" value="ECO:0007669"/>
    <property type="project" value="UniProtKB-UniRule"/>
</dbReference>
<dbReference type="GO" id="GO:0006260">
    <property type="term" value="P:DNA replication"/>
    <property type="evidence" value="ECO:0007669"/>
    <property type="project" value="UniProtKB-UniRule"/>
</dbReference>
<dbReference type="GO" id="GO:0000731">
    <property type="term" value="P:DNA synthesis involved in DNA repair"/>
    <property type="evidence" value="ECO:0007669"/>
    <property type="project" value="TreeGrafter"/>
</dbReference>
<dbReference type="GO" id="GO:0006302">
    <property type="term" value="P:double-strand break repair"/>
    <property type="evidence" value="ECO:0007669"/>
    <property type="project" value="TreeGrafter"/>
</dbReference>
<dbReference type="GO" id="GO:0009432">
    <property type="term" value="P:SOS response"/>
    <property type="evidence" value="ECO:0007669"/>
    <property type="project" value="UniProtKB-UniRule"/>
</dbReference>
<dbReference type="CDD" id="cd03242">
    <property type="entry name" value="ABC_RecF"/>
    <property type="match status" value="1"/>
</dbReference>
<dbReference type="Gene3D" id="3.40.50.300">
    <property type="entry name" value="P-loop containing nucleotide triphosphate hydrolases"/>
    <property type="match status" value="1"/>
</dbReference>
<dbReference type="Gene3D" id="1.20.1050.90">
    <property type="entry name" value="RecF/RecN/SMC, N-terminal domain"/>
    <property type="match status" value="1"/>
</dbReference>
<dbReference type="HAMAP" id="MF_00365">
    <property type="entry name" value="RecF"/>
    <property type="match status" value="1"/>
</dbReference>
<dbReference type="InterPro" id="IPR003593">
    <property type="entry name" value="AAA+_ATPase"/>
</dbReference>
<dbReference type="InterPro" id="IPR001238">
    <property type="entry name" value="DNA-binding_RecF"/>
</dbReference>
<dbReference type="InterPro" id="IPR018078">
    <property type="entry name" value="DNA-binding_RecF_CS"/>
</dbReference>
<dbReference type="InterPro" id="IPR027417">
    <property type="entry name" value="P-loop_NTPase"/>
</dbReference>
<dbReference type="InterPro" id="IPR003395">
    <property type="entry name" value="RecF/RecN/SMC_N"/>
</dbReference>
<dbReference type="InterPro" id="IPR042174">
    <property type="entry name" value="RecF_2"/>
</dbReference>
<dbReference type="NCBIfam" id="TIGR00611">
    <property type="entry name" value="recf"/>
    <property type="match status" value="1"/>
</dbReference>
<dbReference type="PANTHER" id="PTHR32182">
    <property type="entry name" value="DNA REPLICATION AND REPAIR PROTEIN RECF"/>
    <property type="match status" value="1"/>
</dbReference>
<dbReference type="PANTHER" id="PTHR32182:SF0">
    <property type="entry name" value="DNA REPLICATION AND REPAIR PROTEIN RECF"/>
    <property type="match status" value="1"/>
</dbReference>
<dbReference type="Pfam" id="PF02463">
    <property type="entry name" value="SMC_N"/>
    <property type="match status" value="1"/>
</dbReference>
<dbReference type="SMART" id="SM00382">
    <property type="entry name" value="AAA"/>
    <property type="match status" value="1"/>
</dbReference>
<dbReference type="SUPFAM" id="SSF52540">
    <property type="entry name" value="P-loop containing nucleoside triphosphate hydrolases"/>
    <property type="match status" value="1"/>
</dbReference>
<dbReference type="PROSITE" id="PS00617">
    <property type="entry name" value="RECF_1"/>
    <property type="match status" value="1"/>
</dbReference>
<dbReference type="PROSITE" id="PS00618">
    <property type="entry name" value="RECF_2"/>
    <property type="match status" value="1"/>
</dbReference>
<gene>
    <name evidence="1" type="primary">recF</name>
    <name type="ordered locus">BMEI1941</name>
</gene>
<proteinExistence type="inferred from homology"/>
<keyword id="KW-0067">ATP-binding</keyword>
<keyword id="KW-0963">Cytoplasm</keyword>
<keyword id="KW-0227">DNA damage</keyword>
<keyword id="KW-0234">DNA repair</keyword>
<keyword id="KW-0235">DNA replication</keyword>
<keyword id="KW-0238">DNA-binding</keyword>
<keyword id="KW-0547">Nucleotide-binding</keyword>
<keyword id="KW-0742">SOS response</keyword>
<organism>
    <name type="scientific">Brucella melitensis biotype 1 (strain ATCC 23456 / CCUG 17765 / NCTC 10094 / 16M)</name>
    <dbReference type="NCBI Taxonomy" id="224914"/>
    <lineage>
        <taxon>Bacteria</taxon>
        <taxon>Pseudomonadati</taxon>
        <taxon>Pseudomonadota</taxon>
        <taxon>Alphaproteobacteria</taxon>
        <taxon>Hyphomicrobiales</taxon>
        <taxon>Brucellaceae</taxon>
        <taxon>Brucella/Ochrobactrum group</taxon>
        <taxon>Brucella</taxon>
    </lineage>
</organism>
<evidence type="ECO:0000255" key="1">
    <source>
        <dbReference type="HAMAP-Rule" id="MF_00365"/>
    </source>
</evidence>
<accession>Q8YED7</accession>
<reference key="1">
    <citation type="journal article" date="2002" name="Proc. Natl. Acad. Sci. U.S.A.">
        <title>The genome sequence of the facultative intracellular pathogen Brucella melitensis.</title>
        <authorList>
            <person name="DelVecchio V.G."/>
            <person name="Kapatral V."/>
            <person name="Redkar R.J."/>
            <person name="Patra G."/>
            <person name="Mujer C."/>
            <person name="Los T."/>
            <person name="Ivanova N."/>
            <person name="Anderson I."/>
            <person name="Bhattacharyya A."/>
            <person name="Lykidis A."/>
            <person name="Reznik G."/>
            <person name="Jablonski L."/>
            <person name="Larsen N."/>
            <person name="D'Souza M."/>
            <person name="Bernal A."/>
            <person name="Mazur M."/>
            <person name="Goltsman E."/>
            <person name="Selkov E."/>
            <person name="Elzer P.H."/>
            <person name="Hagius S."/>
            <person name="O'Callaghan D."/>
            <person name="Letesson J.-J."/>
            <person name="Haselkorn R."/>
            <person name="Kyrpides N.C."/>
            <person name="Overbeek R."/>
        </authorList>
    </citation>
    <scope>NUCLEOTIDE SEQUENCE [LARGE SCALE GENOMIC DNA]</scope>
    <source>
        <strain>ATCC 23456 / CCUG 17765 / NCTC 10094 / 16M</strain>
    </source>
</reference>
<protein>
    <recommendedName>
        <fullName evidence="1">DNA replication and repair protein RecF</fullName>
    </recommendedName>
</protein>
<feature type="chain" id="PRO_0000196400" description="DNA replication and repair protein RecF">
    <location>
        <begin position="1"/>
        <end position="384"/>
    </location>
</feature>
<feature type="binding site" evidence="1">
    <location>
        <begin position="43"/>
        <end position="50"/>
    </location>
    <ligand>
        <name>ATP</name>
        <dbReference type="ChEBI" id="CHEBI:30616"/>
    </ligand>
</feature>
<name>RECF_BRUME</name>
<comment type="function">
    <text evidence="1">The RecF protein is involved in DNA metabolism; it is required for DNA replication and normal SOS inducibility. RecF binds preferentially to single-stranded, linear DNA. It also seems to bind ATP.</text>
</comment>
<comment type="subcellular location">
    <subcellularLocation>
        <location evidence="1">Cytoplasm</location>
    </subcellularLocation>
</comment>
<comment type="similarity">
    <text evidence="1">Belongs to the RecF family.</text>
</comment>